<keyword id="KW-1015">Disulfide bond</keyword>
<keyword id="KW-0372">Hormone</keyword>
<keyword id="KW-0421">Lactation</keyword>
<keyword id="KW-0597">Phosphoprotein</keyword>
<keyword id="KW-0964">Secreted</keyword>
<keyword id="KW-0732">Signal</keyword>
<accession>Q9QZL1</accession>
<gene>
    <name type="primary">PRL</name>
</gene>
<feature type="signal peptide" evidence="4">
    <location>
        <begin position="1"/>
        <end position="28"/>
    </location>
</feature>
<feature type="chain" id="PRO_0000032919" description="Prolactin">
    <location>
        <begin position="29"/>
        <end position="225"/>
    </location>
</feature>
<feature type="modified residue" description="Phosphoserine" evidence="3">
    <location>
        <position position="52"/>
    </location>
</feature>
<feature type="modified residue" description="Phosphoserine" evidence="3">
    <location>
        <position position="116"/>
    </location>
</feature>
<feature type="disulfide bond" evidence="1">
    <location>
        <begin position="32"/>
        <end position="37"/>
    </location>
</feature>
<feature type="disulfide bond" evidence="1">
    <location>
        <begin position="84"/>
        <end position="200"/>
    </location>
</feature>
<feature type="disulfide bond" evidence="1">
    <location>
        <begin position="217"/>
        <end position="225"/>
    </location>
</feature>
<protein>
    <recommendedName>
        <fullName>Prolactin</fullName>
        <shortName>PRL</shortName>
    </recommendedName>
</protein>
<name>PRL_ALEMO</name>
<sequence>MTIQGSDRKGTLLLLVMSNLLFCQNVHPLPICHSGNCQMTLQELFDRVIMLSHYVYMMSADMFIEFEKRYAQDHEFIAKAINDCPTSSLATPEDKEEAQQVPPEVLLNLILSLVHSWNGPLFQLVTEVDGIHEASDAIISRAKEIGEQNKRLLEGIEKILGQAYPEAKGNEVYSVWSQFPSLQGIDEESRDLALYNKIRCLRRDSHKVDNYLKLLRCRIVHNNNC</sequence>
<evidence type="ECO:0000250" key="1"/>
<evidence type="ECO:0000250" key="2">
    <source>
        <dbReference type="UniProtKB" id="P01236"/>
    </source>
</evidence>
<evidence type="ECO:0000250" key="3">
    <source>
        <dbReference type="UniProtKB" id="P01239"/>
    </source>
</evidence>
<evidence type="ECO:0000255" key="4"/>
<evidence type="ECO:0000305" key="5"/>
<proteinExistence type="evidence at transcript level"/>
<dbReference type="EMBL" id="AF178933">
    <property type="protein sequence ID" value="AAD53180.1"/>
    <property type="molecule type" value="mRNA"/>
</dbReference>
<dbReference type="SMR" id="Q9QZL1"/>
<dbReference type="GO" id="GO:0005615">
    <property type="term" value="C:extracellular space"/>
    <property type="evidence" value="ECO:0007669"/>
    <property type="project" value="TreeGrafter"/>
</dbReference>
<dbReference type="GO" id="GO:0005179">
    <property type="term" value="F:hormone activity"/>
    <property type="evidence" value="ECO:0007669"/>
    <property type="project" value="UniProtKB-KW"/>
</dbReference>
<dbReference type="GO" id="GO:0005148">
    <property type="term" value="F:prolactin receptor binding"/>
    <property type="evidence" value="ECO:0007669"/>
    <property type="project" value="TreeGrafter"/>
</dbReference>
<dbReference type="GO" id="GO:0007565">
    <property type="term" value="P:female pregnancy"/>
    <property type="evidence" value="ECO:0007669"/>
    <property type="project" value="TreeGrafter"/>
</dbReference>
<dbReference type="GO" id="GO:0007595">
    <property type="term" value="P:lactation"/>
    <property type="evidence" value="ECO:0007669"/>
    <property type="project" value="UniProtKB-KW"/>
</dbReference>
<dbReference type="GO" id="GO:0008284">
    <property type="term" value="P:positive regulation of cell population proliferation"/>
    <property type="evidence" value="ECO:0007669"/>
    <property type="project" value="TreeGrafter"/>
</dbReference>
<dbReference type="GO" id="GO:1903489">
    <property type="term" value="P:positive regulation of lactation"/>
    <property type="evidence" value="ECO:0007669"/>
    <property type="project" value="TreeGrafter"/>
</dbReference>
<dbReference type="GO" id="GO:0046427">
    <property type="term" value="P:positive regulation of receptor signaling pathway via JAK-STAT"/>
    <property type="evidence" value="ECO:0007669"/>
    <property type="project" value="TreeGrafter"/>
</dbReference>
<dbReference type="GO" id="GO:0031667">
    <property type="term" value="P:response to nutrient levels"/>
    <property type="evidence" value="ECO:0007669"/>
    <property type="project" value="TreeGrafter"/>
</dbReference>
<dbReference type="CDD" id="cd10288">
    <property type="entry name" value="prolactin_like"/>
    <property type="match status" value="1"/>
</dbReference>
<dbReference type="FunFam" id="1.20.1250.10:FF:000003">
    <property type="entry name" value="Prolactin"/>
    <property type="match status" value="1"/>
</dbReference>
<dbReference type="Gene3D" id="1.20.1250.10">
    <property type="match status" value="1"/>
</dbReference>
<dbReference type="InterPro" id="IPR009079">
    <property type="entry name" value="4_helix_cytokine-like_core"/>
</dbReference>
<dbReference type="InterPro" id="IPR001400">
    <property type="entry name" value="Somatotropin/Prolactin"/>
</dbReference>
<dbReference type="InterPro" id="IPR018116">
    <property type="entry name" value="Somatotropin_CS"/>
</dbReference>
<dbReference type="PANTHER" id="PTHR11417:SF5">
    <property type="entry name" value="PROLACTIN"/>
    <property type="match status" value="1"/>
</dbReference>
<dbReference type="PANTHER" id="PTHR11417">
    <property type="entry name" value="SOMATOTROPIN,PROLACTIN"/>
    <property type="match status" value="1"/>
</dbReference>
<dbReference type="Pfam" id="PF00103">
    <property type="entry name" value="Hormone_1"/>
    <property type="match status" value="1"/>
</dbReference>
<dbReference type="PRINTS" id="PR00836">
    <property type="entry name" value="SOMATOTROPIN"/>
</dbReference>
<dbReference type="SUPFAM" id="SSF47266">
    <property type="entry name" value="4-helical cytokines"/>
    <property type="match status" value="1"/>
</dbReference>
<dbReference type="PROSITE" id="PS00266">
    <property type="entry name" value="SOMATOTROPIN_1"/>
    <property type="match status" value="1"/>
</dbReference>
<dbReference type="PROSITE" id="PS00338">
    <property type="entry name" value="SOMATOTROPIN_2"/>
    <property type="match status" value="1"/>
</dbReference>
<comment type="function">
    <text>Prolactin acts primarily on the mammary gland by promoting lactation.</text>
</comment>
<comment type="subunit">
    <text evidence="2">Interacts with PRLR.</text>
</comment>
<comment type="subcellular location">
    <subcellularLocation>
        <location>Secreted</location>
    </subcellularLocation>
</comment>
<comment type="similarity">
    <text evidence="5">Belongs to the somatotropin/prolactin family.</text>
</comment>
<reference key="1">
    <citation type="submission" date="1999-08" db="EMBL/GenBank/DDBJ databases">
        <title>Sequencing of prolactin cDNA of Japanese field vole.</title>
        <authorList>
            <person name="Ohboshi S."/>
            <person name="Asami W."/>
            <person name="Kaneko M."/>
            <person name="Yoshida S."/>
            <person name="Yoshida T."/>
            <person name="Tomogane H."/>
        </authorList>
    </citation>
    <scope>NUCLEOTIDE SEQUENCE [MRNA]</scope>
</reference>
<organism>
    <name type="scientific">Alexandromys montebelli</name>
    <name type="common">Japanese grass vole</name>
    <name type="synonym">Microtus montebelli</name>
    <dbReference type="NCBI Taxonomy" id="3369701"/>
    <lineage>
        <taxon>Eukaryota</taxon>
        <taxon>Metazoa</taxon>
        <taxon>Chordata</taxon>
        <taxon>Craniata</taxon>
        <taxon>Vertebrata</taxon>
        <taxon>Euteleostomi</taxon>
        <taxon>Mammalia</taxon>
        <taxon>Eutheria</taxon>
        <taxon>Euarchontoglires</taxon>
        <taxon>Glires</taxon>
        <taxon>Rodentia</taxon>
        <taxon>Myomorpha</taxon>
        <taxon>Muroidea</taxon>
        <taxon>Cricetidae</taxon>
        <taxon>Arvicolinae</taxon>
        <taxon>Alexandromys</taxon>
    </lineage>
</organism>